<gene>
    <name type="ORF">GA10313</name>
</gene>
<protein>
    <recommendedName>
        <fullName>Glutathione S-transferase C-terminal domain-containing protein homolog</fullName>
    </recommendedName>
</protein>
<organism>
    <name type="scientific">Drosophila pseudoobscura pseudoobscura</name>
    <name type="common">Fruit fly</name>
    <dbReference type="NCBI Taxonomy" id="46245"/>
    <lineage>
        <taxon>Eukaryota</taxon>
        <taxon>Metazoa</taxon>
        <taxon>Ecdysozoa</taxon>
        <taxon>Arthropoda</taxon>
        <taxon>Hexapoda</taxon>
        <taxon>Insecta</taxon>
        <taxon>Pterygota</taxon>
        <taxon>Neoptera</taxon>
        <taxon>Endopterygota</taxon>
        <taxon>Diptera</taxon>
        <taxon>Brachycera</taxon>
        <taxon>Muscomorpha</taxon>
        <taxon>Ephydroidea</taxon>
        <taxon>Drosophilidae</taxon>
        <taxon>Drosophila</taxon>
        <taxon>Sophophora</taxon>
    </lineage>
</organism>
<sequence length="586" mass="66440">MDQLYLEIEISTQNAETTIYTSVSSFLALYTYRYLNEPKNIQVNFVATKIESGKIALRSSQLRRELTDQHITCREAAKLPAIRDLRLPIYEKDGNTFIAGTCAVCRELIARQPNTELRKLLGFKESCLLAPSEASIWTRFCEVDVVDVVSRLHEGLLLKAVPDEVVRFEQHMNEPVRMHNIYKQAREQANQTENGAKIKRKHRVQIDGRTPKEQLLIEHRFAEGISFTIADLILYPLLRIVFQHCGQMLPHFPLTSTWFSEIDSFDGTCAKILGDLYVPQAASQGEELLSIPDCDATSLYKADPKRYKPRNRIYTSQAEVDLALAKLSELQLVFSTDSEHTYGQQTIDWQKIEPTHAKSSALPQERLERKRQQLENMANAVVSLAQPGDRIVDFCSGTGHLAILLALKLPLCTIIVMENKSFSLAQAQKRALELELSNCVFYQCNIDYFVGRFDIGASLHACGTATDIVLQQCRRSVAHFVCCPCCYGSLQPMPHISYPLSQRFQRVLSTNDYLYIAHTADQAHEMGTTNCKPETTLQGLQCMSIVDTDRKLQSEEAGYQVILTRLKPEQCTPKNHLLVGRFVKQN</sequence>
<accession>Q29LT4</accession>
<proteinExistence type="inferred from homology"/>
<evidence type="ECO:0000305" key="1"/>
<name>GSTCD_DROPS</name>
<keyword id="KW-1185">Reference proteome</keyword>
<dbReference type="EMBL" id="CH379060">
    <property type="protein sequence ID" value="EAL33961.1"/>
    <property type="molecule type" value="Genomic_DNA"/>
</dbReference>
<dbReference type="RefSeq" id="XP_001356895.1">
    <property type="nucleotide sequence ID" value="XM_001356859.3"/>
</dbReference>
<dbReference type="RefSeq" id="XP_015036283.1">
    <property type="nucleotide sequence ID" value="XM_015180797.1"/>
</dbReference>
<dbReference type="FunCoup" id="Q29LT4">
    <property type="interactions" value="1913"/>
</dbReference>
<dbReference type="STRING" id="46245.Q29LT4"/>
<dbReference type="EnsemblMetazoa" id="FBtr0281342">
    <property type="protein sequence ID" value="FBpp0279780"/>
    <property type="gene ID" value="FBgn0070371"/>
</dbReference>
<dbReference type="EnsemblMetazoa" id="FBtr0380517">
    <property type="protein sequence ID" value="FBpp0340923"/>
    <property type="gene ID" value="FBgn0070371"/>
</dbReference>
<dbReference type="eggNOG" id="ENOG502QUFE">
    <property type="taxonomic scope" value="Eukaryota"/>
</dbReference>
<dbReference type="HOGENOM" id="CLU_013673_1_0_1"/>
<dbReference type="InParanoid" id="Q29LT4"/>
<dbReference type="OMA" id="WTRFCEV"/>
<dbReference type="PhylomeDB" id="Q29LT4"/>
<dbReference type="Proteomes" id="UP000001819">
    <property type="component" value="Unplaced"/>
</dbReference>
<dbReference type="Bgee" id="FBgn0070371">
    <property type="expression patterns" value="Expressed in female reproductive system and 3 other cell types or tissues"/>
</dbReference>
<dbReference type="GO" id="GO:0005737">
    <property type="term" value="C:cytoplasm"/>
    <property type="evidence" value="ECO:0007669"/>
    <property type="project" value="TreeGrafter"/>
</dbReference>
<dbReference type="CDD" id="cd02440">
    <property type="entry name" value="AdoMet_MTases"/>
    <property type="match status" value="1"/>
</dbReference>
<dbReference type="CDD" id="cd00299">
    <property type="entry name" value="GST_C_family"/>
    <property type="match status" value="1"/>
</dbReference>
<dbReference type="FunFam" id="3.40.50.150:FF:000623">
    <property type="entry name" value="Glutathione S-transferase C-terminal domain-containing protein homolog"/>
    <property type="match status" value="1"/>
</dbReference>
<dbReference type="Gene3D" id="3.40.50.150">
    <property type="entry name" value="Vaccinia Virus protein VP39"/>
    <property type="match status" value="1"/>
</dbReference>
<dbReference type="InterPro" id="IPR036282">
    <property type="entry name" value="Glutathione-S-Trfase_C_sf"/>
</dbReference>
<dbReference type="InterPro" id="IPR025714">
    <property type="entry name" value="Methyltranfer_dom"/>
</dbReference>
<dbReference type="InterPro" id="IPR029063">
    <property type="entry name" value="SAM-dependent_MTases_sf"/>
</dbReference>
<dbReference type="PANTHER" id="PTHR13369">
    <property type="match status" value="1"/>
</dbReference>
<dbReference type="PANTHER" id="PTHR13369:SF0">
    <property type="entry name" value="GLUTATHIONE S-TRANSFERASE C-TERMINAL DOMAIN-CONTAINING PROTEIN"/>
    <property type="match status" value="1"/>
</dbReference>
<dbReference type="Pfam" id="PF13679">
    <property type="entry name" value="Methyltransf_32"/>
    <property type="match status" value="1"/>
</dbReference>
<dbReference type="SUPFAM" id="SSF47616">
    <property type="entry name" value="GST C-terminal domain-like"/>
    <property type="match status" value="1"/>
</dbReference>
<dbReference type="SUPFAM" id="SSF53335">
    <property type="entry name" value="S-adenosyl-L-methionine-dependent methyltransferases"/>
    <property type="match status" value="1"/>
</dbReference>
<comment type="similarity">
    <text evidence="1">Belongs to the GSTCD family.</text>
</comment>
<reference key="1">
    <citation type="journal article" date="2005" name="Genome Res.">
        <title>Comparative genome sequencing of Drosophila pseudoobscura: chromosomal, gene, and cis-element evolution.</title>
        <authorList>
            <person name="Richards S."/>
            <person name="Liu Y."/>
            <person name="Bettencourt B.R."/>
            <person name="Hradecky P."/>
            <person name="Letovsky S."/>
            <person name="Nielsen R."/>
            <person name="Thornton K."/>
            <person name="Hubisz M.J."/>
            <person name="Chen R."/>
            <person name="Meisel R.P."/>
            <person name="Couronne O."/>
            <person name="Hua S."/>
            <person name="Smith M.A."/>
            <person name="Zhang P."/>
            <person name="Liu J."/>
            <person name="Bussemaker H.J."/>
            <person name="van Batenburg M.F."/>
            <person name="Howells S.L."/>
            <person name="Scherer S.E."/>
            <person name="Sodergren E."/>
            <person name="Matthews B.B."/>
            <person name="Crosby M.A."/>
            <person name="Schroeder A.J."/>
            <person name="Ortiz-Barrientos D."/>
            <person name="Rives C.M."/>
            <person name="Metzker M.L."/>
            <person name="Muzny D.M."/>
            <person name="Scott G."/>
            <person name="Steffen D."/>
            <person name="Wheeler D.A."/>
            <person name="Worley K.C."/>
            <person name="Havlak P."/>
            <person name="Durbin K.J."/>
            <person name="Egan A."/>
            <person name="Gill R."/>
            <person name="Hume J."/>
            <person name="Morgan M.B."/>
            <person name="Miner G."/>
            <person name="Hamilton C."/>
            <person name="Huang Y."/>
            <person name="Waldron L."/>
            <person name="Verduzco D."/>
            <person name="Clerc-Blankenburg K.P."/>
            <person name="Dubchak I."/>
            <person name="Noor M.A.F."/>
            <person name="Anderson W."/>
            <person name="White K.P."/>
            <person name="Clark A.G."/>
            <person name="Schaeffer S.W."/>
            <person name="Gelbart W.M."/>
            <person name="Weinstock G.M."/>
            <person name="Gibbs R.A."/>
        </authorList>
    </citation>
    <scope>NUCLEOTIDE SEQUENCE [LARGE SCALE GENOMIC DNA]</scope>
    <source>
        <strain>MV2-25 / Tucson 14011-0121.94</strain>
    </source>
</reference>
<feature type="chain" id="PRO_0000316956" description="Glutathione S-transferase C-terminal domain-containing protein homolog">
    <location>
        <begin position="1"/>
        <end position="586"/>
    </location>
</feature>
<feature type="domain" description="GST C-terminal">
    <location>
        <begin position="121"/>
        <end position="276"/>
    </location>
</feature>